<name>TX18A_MYRGU</name>
<accession>P0DSK5</accession>
<sequence length="114" mass="12116">MKLSTLLVAFVLLVITVILSTPSTNAKALAESNALAVAVSEAEPWLGALFSFIRFIAPYVIRAVRVLIQVVSKVVKPAKVAMKYAKKIATNVAKDVAKDMATDIAIDTITGGDE</sequence>
<organism>
    <name type="scientific">Myrmecia gulosa</name>
    <name type="common">Red bulldog ant</name>
    <dbReference type="NCBI Taxonomy" id="36170"/>
    <lineage>
        <taxon>Eukaryota</taxon>
        <taxon>Metazoa</taxon>
        <taxon>Ecdysozoa</taxon>
        <taxon>Arthropoda</taxon>
        <taxon>Hexapoda</taxon>
        <taxon>Insecta</taxon>
        <taxon>Pterygota</taxon>
        <taxon>Neoptera</taxon>
        <taxon>Endopterygota</taxon>
        <taxon>Hymenoptera</taxon>
        <taxon>Apocrita</taxon>
        <taxon>Aculeata</taxon>
        <taxon>Formicoidea</taxon>
        <taxon>Formicidae</taxon>
        <taxon>Myrmeciinae</taxon>
        <taxon>Myrmeciini</taxon>
        <taxon>Myrmecia</taxon>
    </lineage>
</organism>
<proteinExistence type="inferred from homology"/>
<feature type="signal peptide" evidence="1">
    <location>
        <begin position="1"/>
        <end position="20"/>
    </location>
</feature>
<feature type="propeptide" id="PRO_0000447096" evidence="4">
    <location>
        <begin position="21"/>
        <end position="44"/>
    </location>
</feature>
<feature type="chain" id="PRO_0000447097" description="U-myrmeciitoxin(01)-Mg8a" evidence="4">
    <location>
        <begin position="45"/>
        <end position="114"/>
    </location>
</feature>
<protein>
    <recommendedName>
        <fullName evidence="3">U-myrmeciitoxin(01)-Mg8a</fullName>
        <shortName evidence="2">MIITX(01)-Mg8a</shortName>
        <shortName evidence="3">U-MIITX(01)-Mg8a</shortName>
    </recommendedName>
</protein>
<comment type="function">
    <text evidence="3">May have antimicrobial properties, like most ant linear peptides.</text>
</comment>
<comment type="subcellular location">
    <subcellularLocation>
        <location evidence="4">Secreted</location>
    </subcellularLocation>
</comment>
<comment type="tissue specificity">
    <text evidence="4">Expressed by the venom gland.</text>
</comment>
<comment type="similarity">
    <text evidence="3">Belongs to the formicidae venom precursor-01 superfamily.</text>
</comment>
<comment type="online information" name="National Center for Biotechnology Information (NCBI)">
    <link uri="https://www.ncbi.nlm.nih.gov/nuccore/GGFG01000012"/>
</comment>
<evidence type="ECO:0000255" key="1"/>
<evidence type="ECO:0000303" key="2">
    <source>
    </source>
</evidence>
<evidence type="ECO:0000305" key="3"/>
<evidence type="ECO:0000305" key="4">
    <source>
    </source>
</evidence>
<reference key="1">
    <citation type="journal article" date="2018" name="Sci. Adv.">
        <title>A comprehensive portrait of the venom of the giant red bull ant, Myrmecia gulosa, reveals a hyperdiverse hymenopteran toxin gene family.</title>
        <authorList>
            <person name="Robinson S.D."/>
            <person name="Mueller A."/>
            <person name="Clayton D."/>
            <person name="Starobova H."/>
            <person name="Hamilton B.R."/>
            <person name="Payne R.J."/>
            <person name="Vetter I."/>
            <person name="King G.F."/>
            <person name="Undheim E.A.B."/>
        </authorList>
    </citation>
    <scope>NUCLEOTIDE SEQUENCE [MRNA]</scope>
    <source>
        <tissue>Venom gland</tissue>
    </source>
</reference>
<keyword id="KW-0929">Antimicrobial</keyword>
<keyword id="KW-0964">Secreted</keyword>
<keyword id="KW-0732">Signal</keyword>
<dbReference type="GO" id="GO:0005576">
    <property type="term" value="C:extracellular region"/>
    <property type="evidence" value="ECO:0007669"/>
    <property type="project" value="UniProtKB-SubCell"/>
</dbReference>